<keyword id="KW-0029">Amino-acid transport</keyword>
<keyword id="KW-0067">ATP-binding</keyword>
<keyword id="KW-0997">Cell inner membrane</keyword>
<keyword id="KW-1003">Cell membrane</keyword>
<keyword id="KW-0472">Membrane</keyword>
<keyword id="KW-0547">Nucleotide-binding</keyword>
<keyword id="KW-1278">Translocase</keyword>
<keyword id="KW-0813">Transport</keyword>
<name>METN2_ACIAD</name>
<protein>
    <recommendedName>
        <fullName evidence="1">Methionine import ATP-binding protein MetN 2</fullName>
        <ecNumber evidence="1">7.4.2.11</ecNumber>
    </recommendedName>
</protein>
<feature type="chain" id="PRO_0000270227" description="Methionine import ATP-binding protein MetN 2">
    <location>
        <begin position="1"/>
        <end position="341"/>
    </location>
</feature>
<feature type="domain" description="ABC transporter" evidence="1">
    <location>
        <begin position="2"/>
        <end position="241"/>
    </location>
</feature>
<feature type="binding site" evidence="1">
    <location>
        <begin position="38"/>
        <end position="45"/>
    </location>
    <ligand>
        <name>ATP</name>
        <dbReference type="ChEBI" id="CHEBI:30616"/>
    </ligand>
</feature>
<evidence type="ECO:0000255" key="1">
    <source>
        <dbReference type="HAMAP-Rule" id="MF_01719"/>
    </source>
</evidence>
<organism>
    <name type="scientific">Acinetobacter baylyi (strain ATCC 33305 / BD413 / ADP1)</name>
    <dbReference type="NCBI Taxonomy" id="62977"/>
    <lineage>
        <taxon>Bacteria</taxon>
        <taxon>Pseudomonadati</taxon>
        <taxon>Pseudomonadota</taxon>
        <taxon>Gammaproteobacteria</taxon>
        <taxon>Moraxellales</taxon>
        <taxon>Moraxellaceae</taxon>
        <taxon>Acinetobacter</taxon>
    </lineage>
</organism>
<sequence>MIQFKNISKHYQLKGQTIHALDQINLDIPAGSIFGIIGYSGAGKSTLIRLINLLERPTHGQIIINQKDFTALNAQSLRQERANIGMIFQHFNLLQTKTVAANIEMPLKLLGYSKIEREKRLMELLDFIDLTHKKDAFPDELSGGQKQRVGIARALANHPKILLCDEATSALDPQTTKSVLALLKKINKEQGITIVMVTHEMDVIESICDHVAVMESGHVIETGPTVEIFSNPQHPTTKTFIQTVLQQHLPVNILSKLEHQHHHSIYRLQFLGKSAQEPVIQSMIKQFDISLNILFANMTEIDGTVIGQMFVQLLGDDTLIQQAIEFLERHGVSVNQSGEQV</sequence>
<reference key="1">
    <citation type="journal article" date="2004" name="Nucleic Acids Res.">
        <title>Unique features revealed by the genome sequence of Acinetobacter sp. ADP1, a versatile and naturally transformation competent bacterium.</title>
        <authorList>
            <person name="Barbe V."/>
            <person name="Vallenet D."/>
            <person name="Fonknechten N."/>
            <person name="Kreimeyer A."/>
            <person name="Oztas S."/>
            <person name="Labarre L."/>
            <person name="Cruveiller S."/>
            <person name="Robert C."/>
            <person name="Duprat S."/>
            <person name="Wincker P."/>
            <person name="Ornston L.N."/>
            <person name="Weissenbach J."/>
            <person name="Marliere P."/>
            <person name="Cohen G.N."/>
            <person name="Medigue C."/>
        </authorList>
    </citation>
    <scope>NUCLEOTIDE SEQUENCE [LARGE SCALE GENOMIC DNA]</scope>
    <source>
        <strain>ATCC 33305 / BD413 / ADP1</strain>
    </source>
</reference>
<gene>
    <name evidence="1" type="primary">metN2</name>
    <name type="ordered locus">ACIAD2450</name>
</gene>
<accession>Q6F9P2</accession>
<comment type="function">
    <text evidence="1">Part of the ABC transporter complex MetNIQ involved in methionine import. Responsible for energy coupling to the transport system.</text>
</comment>
<comment type="catalytic activity">
    <reaction evidence="1">
        <text>L-methionine(out) + ATP + H2O = L-methionine(in) + ADP + phosphate + H(+)</text>
        <dbReference type="Rhea" id="RHEA:29779"/>
        <dbReference type="ChEBI" id="CHEBI:15377"/>
        <dbReference type="ChEBI" id="CHEBI:15378"/>
        <dbReference type="ChEBI" id="CHEBI:30616"/>
        <dbReference type="ChEBI" id="CHEBI:43474"/>
        <dbReference type="ChEBI" id="CHEBI:57844"/>
        <dbReference type="ChEBI" id="CHEBI:456216"/>
        <dbReference type="EC" id="7.4.2.11"/>
    </reaction>
</comment>
<comment type="catalytic activity">
    <reaction evidence="1">
        <text>D-methionine(out) + ATP + H2O = D-methionine(in) + ADP + phosphate + H(+)</text>
        <dbReference type="Rhea" id="RHEA:29767"/>
        <dbReference type="ChEBI" id="CHEBI:15377"/>
        <dbReference type="ChEBI" id="CHEBI:15378"/>
        <dbReference type="ChEBI" id="CHEBI:30616"/>
        <dbReference type="ChEBI" id="CHEBI:43474"/>
        <dbReference type="ChEBI" id="CHEBI:57932"/>
        <dbReference type="ChEBI" id="CHEBI:456216"/>
        <dbReference type="EC" id="7.4.2.11"/>
    </reaction>
</comment>
<comment type="subunit">
    <text evidence="1">The complex is composed of two ATP-binding proteins (MetN), two transmembrane proteins (MetI) and a solute-binding protein (MetQ).</text>
</comment>
<comment type="subcellular location">
    <subcellularLocation>
        <location evidence="1">Cell inner membrane</location>
        <topology evidence="1">Peripheral membrane protein</topology>
    </subcellularLocation>
</comment>
<comment type="similarity">
    <text evidence="1">Belongs to the ABC transporter superfamily. Methionine importer (TC 3.A.1.24) family.</text>
</comment>
<proteinExistence type="inferred from homology"/>
<dbReference type="EC" id="7.4.2.11" evidence="1"/>
<dbReference type="EMBL" id="CR543861">
    <property type="protein sequence ID" value="CAG69222.1"/>
    <property type="molecule type" value="Genomic_DNA"/>
</dbReference>
<dbReference type="RefSeq" id="WP_004928428.1">
    <property type="nucleotide sequence ID" value="NC_005966.1"/>
</dbReference>
<dbReference type="SMR" id="Q6F9P2"/>
<dbReference type="STRING" id="202950.GCA_001485005_01545"/>
<dbReference type="DNASU" id="2878107"/>
<dbReference type="GeneID" id="45234757"/>
<dbReference type="KEGG" id="aci:ACIAD2450"/>
<dbReference type="eggNOG" id="COG1135">
    <property type="taxonomic scope" value="Bacteria"/>
</dbReference>
<dbReference type="HOGENOM" id="CLU_000604_1_3_6"/>
<dbReference type="OrthoDB" id="9802264at2"/>
<dbReference type="BioCyc" id="ASP62977:ACIAD_RS11200-MONOMER"/>
<dbReference type="Proteomes" id="UP000000430">
    <property type="component" value="Chromosome"/>
</dbReference>
<dbReference type="GO" id="GO:0005886">
    <property type="term" value="C:plasma membrane"/>
    <property type="evidence" value="ECO:0007669"/>
    <property type="project" value="UniProtKB-SubCell"/>
</dbReference>
<dbReference type="GO" id="GO:0033232">
    <property type="term" value="F:ABC-type D-methionine transporter activity"/>
    <property type="evidence" value="ECO:0007669"/>
    <property type="project" value="UniProtKB-EC"/>
</dbReference>
<dbReference type="GO" id="GO:0005524">
    <property type="term" value="F:ATP binding"/>
    <property type="evidence" value="ECO:0007669"/>
    <property type="project" value="UniProtKB-KW"/>
</dbReference>
<dbReference type="GO" id="GO:0016887">
    <property type="term" value="F:ATP hydrolysis activity"/>
    <property type="evidence" value="ECO:0007669"/>
    <property type="project" value="InterPro"/>
</dbReference>
<dbReference type="CDD" id="cd03258">
    <property type="entry name" value="ABC_MetN_methionine_transporter"/>
    <property type="match status" value="1"/>
</dbReference>
<dbReference type="FunFam" id="3.40.50.300:FF:000056">
    <property type="entry name" value="Cell division ATP-binding protein FtsE"/>
    <property type="match status" value="1"/>
</dbReference>
<dbReference type="Gene3D" id="3.30.70.260">
    <property type="match status" value="1"/>
</dbReference>
<dbReference type="Gene3D" id="3.40.50.300">
    <property type="entry name" value="P-loop containing nucleotide triphosphate hydrolases"/>
    <property type="match status" value="1"/>
</dbReference>
<dbReference type="InterPro" id="IPR003593">
    <property type="entry name" value="AAA+_ATPase"/>
</dbReference>
<dbReference type="InterPro" id="IPR003439">
    <property type="entry name" value="ABC_transporter-like_ATP-bd"/>
</dbReference>
<dbReference type="InterPro" id="IPR017871">
    <property type="entry name" value="ABC_transporter-like_CS"/>
</dbReference>
<dbReference type="InterPro" id="IPR045865">
    <property type="entry name" value="ACT-like_dom_sf"/>
</dbReference>
<dbReference type="InterPro" id="IPR041701">
    <property type="entry name" value="MetN_ABC"/>
</dbReference>
<dbReference type="InterPro" id="IPR050086">
    <property type="entry name" value="MetN_ABC_transporter-like"/>
</dbReference>
<dbReference type="InterPro" id="IPR018449">
    <property type="entry name" value="NIL_domain"/>
</dbReference>
<dbReference type="InterPro" id="IPR027417">
    <property type="entry name" value="P-loop_NTPase"/>
</dbReference>
<dbReference type="PANTHER" id="PTHR43166">
    <property type="entry name" value="AMINO ACID IMPORT ATP-BINDING PROTEIN"/>
    <property type="match status" value="1"/>
</dbReference>
<dbReference type="PANTHER" id="PTHR43166:SF30">
    <property type="entry name" value="METHIONINE IMPORT ATP-BINDING PROTEIN METN"/>
    <property type="match status" value="1"/>
</dbReference>
<dbReference type="Pfam" id="PF00005">
    <property type="entry name" value="ABC_tran"/>
    <property type="match status" value="1"/>
</dbReference>
<dbReference type="Pfam" id="PF09383">
    <property type="entry name" value="NIL"/>
    <property type="match status" value="1"/>
</dbReference>
<dbReference type="SMART" id="SM00382">
    <property type="entry name" value="AAA"/>
    <property type="match status" value="1"/>
</dbReference>
<dbReference type="SMART" id="SM00930">
    <property type="entry name" value="NIL"/>
    <property type="match status" value="1"/>
</dbReference>
<dbReference type="SUPFAM" id="SSF55021">
    <property type="entry name" value="ACT-like"/>
    <property type="match status" value="1"/>
</dbReference>
<dbReference type="SUPFAM" id="SSF52540">
    <property type="entry name" value="P-loop containing nucleoside triphosphate hydrolases"/>
    <property type="match status" value="1"/>
</dbReference>
<dbReference type="PROSITE" id="PS00211">
    <property type="entry name" value="ABC_TRANSPORTER_1"/>
    <property type="match status" value="1"/>
</dbReference>
<dbReference type="PROSITE" id="PS50893">
    <property type="entry name" value="ABC_TRANSPORTER_2"/>
    <property type="match status" value="1"/>
</dbReference>
<dbReference type="PROSITE" id="PS51264">
    <property type="entry name" value="METN"/>
    <property type="match status" value="1"/>
</dbReference>